<gene>
    <name evidence="1" type="primary">pyrB</name>
    <name type="ordered locus">CLB_3278</name>
</gene>
<dbReference type="EC" id="2.1.3.2" evidence="1"/>
<dbReference type="EMBL" id="CP000726">
    <property type="protein sequence ID" value="ABS35265.1"/>
    <property type="molecule type" value="Genomic_DNA"/>
</dbReference>
<dbReference type="RefSeq" id="WP_012048210.1">
    <property type="nucleotide sequence ID" value="NC_009697.1"/>
</dbReference>
<dbReference type="SMR" id="A7FYJ2"/>
<dbReference type="GeneID" id="5187965"/>
<dbReference type="KEGG" id="cba:CLB_3278"/>
<dbReference type="HOGENOM" id="CLU_043846_1_2_9"/>
<dbReference type="UniPathway" id="UPA00070">
    <property type="reaction ID" value="UER00116"/>
</dbReference>
<dbReference type="GO" id="GO:0016597">
    <property type="term" value="F:amino acid binding"/>
    <property type="evidence" value="ECO:0007669"/>
    <property type="project" value="InterPro"/>
</dbReference>
<dbReference type="GO" id="GO:0004070">
    <property type="term" value="F:aspartate carbamoyltransferase activity"/>
    <property type="evidence" value="ECO:0007669"/>
    <property type="project" value="UniProtKB-UniRule"/>
</dbReference>
<dbReference type="GO" id="GO:0006207">
    <property type="term" value="P:'de novo' pyrimidine nucleobase biosynthetic process"/>
    <property type="evidence" value="ECO:0007669"/>
    <property type="project" value="InterPro"/>
</dbReference>
<dbReference type="GO" id="GO:0044205">
    <property type="term" value="P:'de novo' UMP biosynthetic process"/>
    <property type="evidence" value="ECO:0007669"/>
    <property type="project" value="UniProtKB-UniRule"/>
</dbReference>
<dbReference type="GO" id="GO:0006520">
    <property type="term" value="P:amino acid metabolic process"/>
    <property type="evidence" value="ECO:0007669"/>
    <property type="project" value="InterPro"/>
</dbReference>
<dbReference type="FunFam" id="3.40.50.1370:FF:000002">
    <property type="entry name" value="Aspartate carbamoyltransferase 2"/>
    <property type="match status" value="1"/>
</dbReference>
<dbReference type="Gene3D" id="3.40.50.1370">
    <property type="entry name" value="Aspartate/ornithine carbamoyltransferase"/>
    <property type="match status" value="2"/>
</dbReference>
<dbReference type="HAMAP" id="MF_00001">
    <property type="entry name" value="Asp_carb_tr"/>
    <property type="match status" value="1"/>
</dbReference>
<dbReference type="InterPro" id="IPR006132">
    <property type="entry name" value="Asp/Orn_carbamoyltranf_P-bd"/>
</dbReference>
<dbReference type="InterPro" id="IPR006130">
    <property type="entry name" value="Asp/Orn_carbamoylTrfase"/>
</dbReference>
<dbReference type="InterPro" id="IPR036901">
    <property type="entry name" value="Asp/Orn_carbamoylTrfase_sf"/>
</dbReference>
<dbReference type="InterPro" id="IPR002082">
    <property type="entry name" value="Asp_carbamoyltransf"/>
</dbReference>
<dbReference type="InterPro" id="IPR006131">
    <property type="entry name" value="Asp_carbamoyltransf_Asp/Orn-bd"/>
</dbReference>
<dbReference type="NCBIfam" id="TIGR00670">
    <property type="entry name" value="asp_carb_tr"/>
    <property type="match status" value="1"/>
</dbReference>
<dbReference type="NCBIfam" id="NF002032">
    <property type="entry name" value="PRK00856.1"/>
    <property type="match status" value="1"/>
</dbReference>
<dbReference type="PANTHER" id="PTHR45753:SF6">
    <property type="entry name" value="ASPARTATE CARBAMOYLTRANSFERASE"/>
    <property type="match status" value="1"/>
</dbReference>
<dbReference type="PANTHER" id="PTHR45753">
    <property type="entry name" value="ORNITHINE CARBAMOYLTRANSFERASE, MITOCHONDRIAL"/>
    <property type="match status" value="1"/>
</dbReference>
<dbReference type="Pfam" id="PF00185">
    <property type="entry name" value="OTCace"/>
    <property type="match status" value="1"/>
</dbReference>
<dbReference type="Pfam" id="PF02729">
    <property type="entry name" value="OTCace_N"/>
    <property type="match status" value="1"/>
</dbReference>
<dbReference type="PRINTS" id="PR00100">
    <property type="entry name" value="AOTCASE"/>
</dbReference>
<dbReference type="PRINTS" id="PR00101">
    <property type="entry name" value="ATCASE"/>
</dbReference>
<dbReference type="SUPFAM" id="SSF53671">
    <property type="entry name" value="Aspartate/ornithine carbamoyltransferase"/>
    <property type="match status" value="1"/>
</dbReference>
<dbReference type="PROSITE" id="PS00097">
    <property type="entry name" value="CARBAMOYLTRANSFERASE"/>
    <property type="match status" value="1"/>
</dbReference>
<protein>
    <recommendedName>
        <fullName evidence="1">Aspartate carbamoyltransferase catalytic subunit</fullName>
        <ecNumber evidence="1">2.1.3.2</ecNumber>
    </recommendedName>
    <alternativeName>
        <fullName evidence="1">Aspartate transcarbamylase</fullName>
        <shortName evidence="1">ATCase</shortName>
    </alternativeName>
</protein>
<reference key="1">
    <citation type="journal article" date="2007" name="PLoS ONE">
        <title>Analysis of the neurotoxin complex genes in Clostridium botulinum A1-A4 and B1 strains: BoNT/A3, /Ba4 and /B1 clusters are located within plasmids.</title>
        <authorList>
            <person name="Smith T.J."/>
            <person name="Hill K.K."/>
            <person name="Foley B.T."/>
            <person name="Detter J.C."/>
            <person name="Munk A.C."/>
            <person name="Bruce D.C."/>
            <person name="Doggett N.A."/>
            <person name="Smith L.A."/>
            <person name="Marks J.D."/>
            <person name="Xie G."/>
            <person name="Brettin T.S."/>
        </authorList>
    </citation>
    <scope>NUCLEOTIDE SEQUENCE [LARGE SCALE GENOMIC DNA]</scope>
    <source>
        <strain>ATCC 19397 / Type A</strain>
    </source>
</reference>
<accession>A7FYJ2</accession>
<keyword id="KW-0665">Pyrimidine biosynthesis</keyword>
<keyword id="KW-0808">Transferase</keyword>
<comment type="function">
    <text evidence="1">Catalyzes the condensation of carbamoyl phosphate and aspartate to form carbamoyl aspartate and inorganic phosphate, the committed step in the de novo pyrimidine nucleotide biosynthesis pathway.</text>
</comment>
<comment type="catalytic activity">
    <reaction evidence="1">
        <text>carbamoyl phosphate + L-aspartate = N-carbamoyl-L-aspartate + phosphate + H(+)</text>
        <dbReference type="Rhea" id="RHEA:20013"/>
        <dbReference type="ChEBI" id="CHEBI:15378"/>
        <dbReference type="ChEBI" id="CHEBI:29991"/>
        <dbReference type="ChEBI" id="CHEBI:32814"/>
        <dbReference type="ChEBI" id="CHEBI:43474"/>
        <dbReference type="ChEBI" id="CHEBI:58228"/>
        <dbReference type="EC" id="2.1.3.2"/>
    </reaction>
</comment>
<comment type="pathway">
    <text evidence="1">Pyrimidine metabolism; UMP biosynthesis via de novo pathway; (S)-dihydroorotate from bicarbonate: step 2/3.</text>
</comment>
<comment type="subunit">
    <text evidence="1">Heterododecamer (2C3:3R2) of six catalytic PyrB chains organized as two trimers (C3), and six regulatory PyrI chains organized as three dimers (R2).</text>
</comment>
<comment type="similarity">
    <text evidence="1">Belongs to the aspartate/ornithine carbamoyltransferase superfamily. ATCase family.</text>
</comment>
<feature type="chain" id="PRO_0000321088" description="Aspartate carbamoyltransferase catalytic subunit">
    <location>
        <begin position="1"/>
        <end position="307"/>
    </location>
</feature>
<feature type="binding site" evidence="1">
    <location>
        <position position="54"/>
    </location>
    <ligand>
        <name>carbamoyl phosphate</name>
        <dbReference type="ChEBI" id="CHEBI:58228"/>
    </ligand>
</feature>
<feature type="binding site" evidence="1">
    <location>
        <position position="55"/>
    </location>
    <ligand>
        <name>carbamoyl phosphate</name>
        <dbReference type="ChEBI" id="CHEBI:58228"/>
    </ligand>
</feature>
<feature type="binding site" evidence="1">
    <location>
        <position position="83"/>
    </location>
    <ligand>
        <name>L-aspartate</name>
        <dbReference type="ChEBI" id="CHEBI:29991"/>
    </ligand>
</feature>
<feature type="binding site" evidence="1">
    <location>
        <position position="104"/>
    </location>
    <ligand>
        <name>carbamoyl phosphate</name>
        <dbReference type="ChEBI" id="CHEBI:58228"/>
    </ligand>
</feature>
<feature type="binding site" evidence="1">
    <location>
        <position position="132"/>
    </location>
    <ligand>
        <name>carbamoyl phosphate</name>
        <dbReference type="ChEBI" id="CHEBI:58228"/>
    </ligand>
</feature>
<feature type="binding site" evidence="1">
    <location>
        <position position="135"/>
    </location>
    <ligand>
        <name>carbamoyl phosphate</name>
        <dbReference type="ChEBI" id="CHEBI:58228"/>
    </ligand>
</feature>
<feature type="binding site" evidence="1">
    <location>
        <position position="165"/>
    </location>
    <ligand>
        <name>L-aspartate</name>
        <dbReference type="ChEBI" id="CHEBI:29991"/>
    </ligand>
</feature>
<feature type="binding site" evidence="1">
    <location>
        <position position="228"/>
    </location>
    <ligand>
        <name>L-aspartate</name>
        <dbReference type="ChEBI" id="CHEBI:29991"/>
    </ligand>
</feature>
<feature type="binding site" evidence="1">
    <location>
        <position position="267"/>
    </location>
    <ligand>
        <name>carbamoyl phosphate</name>
        <dbReference type="ChEBI" id="CHEBI:58228"/>
    </ligand>
</feature>
<feature type="binding site" evidence="1">
    <location>
        <position position="268"/>
    </location>
    <ligand>
        <name>carbamoyl phosphate</name>
        <dbReference type="ChEBI" id="CHEBI:58228"/>
    </ligand>
</feature>
<name>PYRB_CLOB1</name>
<proteinExistence type="inferred from homology"/>
<organism>
    <name type="scientific">Clostridium botulinum (strain ATCC 19397 / Type A)</name>
    <dbReference type="NCBI Taxonomy" id="441770"/>
    <lineage>
        <taxon>Bacteria</taxon>
        <taxon>Bacillati</taxon>
        <taxon>Bacillota</taxon>
        <taxon>Clostridia</taxon>
        <taxon>Eubacteriales</taxon>
        <taxon>Clostridiaceae</taxon>
        <taxon>Clostridium</taxon>
    </lineage>
</organism>
<sequence>MLKGRNLLDPMDFSLEELEEVFKLADEIIEEPEKFLHVCDGKILATLFYEPSTRTRFSFEAAMLRLGGQVIGFSEPNSSSVAKGESVADTIRTVGCYADIAAMRHPKEGAPAIAAMYSDIPVINAGDGSHQHPTQTLTDLLTIRSLKGDLSNLTIGCCGDLKFGRTVHSLVKALSRYKNNKFVFMSPEELKIPDYIRKEILEKNNIEYKEISKMEDAMAELDILYMTRVQRERFFNEDDYVRLKDSYILDGEKMKYAKKDMMVLHPLPRVNEIAYEIDQDPRGCYFKQAKYGMYVRMALIAKLLGVR</sequence>
<evidence type="ECO:0000255" key="1">
    <source>
        <dbReference type="HAMAP-Rule" id="MF_00001"/>
    </source>
</evidence>